<gene>
    <name evidence="1" type="primary">aroD</name>
    <name type="ordered locus">MW0782</name>
</gene>
<reference key="1">
    <citation type="journal article" date="2002" name="Lancet">
        <title>Genome and virulence determinants of high virulence community-acquired MRSA.</title>
        <authorList>
            <person name="Baba T."/>
            <person name="Takeuchi F."/>
            <person name="Kuroda M."/>
            <person name="Yuzawa H."/>
            <person name="Aoki K."/>
            <person name="Oguchi A."/>
            <person name="Nagai Y."/>
            <person name="Iwama N."/>
            <person name="Asano K."/>
            <person name="Naimi T."/>
            <person name="Kuroda H."/>
            <person name="Cui L."/>
            <person name="Yamamoto K."/>
            <person name="Hiramatsu K."/>
        </authorList>
    </citation>
    <scope>NUCLEOTIDE SEQUENCE [LARGE SCALE GENOMIC DNA]</scope>
    <source>
        <strain>MW2</strain>
    </source>
</reference>
<dbReference type="EC" id="4.2.1.10" evidence="1"/>
<dbReference type="EMBL" id="BA000033">
    <property type="protein sequence ID" value="BAB94647.1"/>
    <property type="molecule type" value="Genomic_DNA"/>
</dbReference>
<dbReference type="RefSeq" id="WP_000150012.1">
    <property type="nucleotide sequence ID" value="NC_003923.1"/>
</dbReference>
<dbReference type="PCDDB" id="Q8NXI0"/>
<dbReference type="SMR" id="Q8NXI0"/>
<dbReference type="KEGG" id="sam:MW0782"/>
<dbReference type="HOGENOM" id="CLU_064444_2_1_9"/>
<dbReference type="UniPathway" id="UPA00053">
    <property type="reaction ID" value="UER00086"/>
</dbReference>
<dbReference type="GO" id="GO:0003855">
    <property type="term" value="F:3-dehydroquinate dehydratase activity"/>
    <property type="evidence" value="ECO:0007669"/>
    <property type="project" value="UniProtKB-UniRule"/>
</dbReference>
<dbReference type="GO" id="GO:0046279">
    <property type="term" value="P:3,4-dihydroxybenzoate biosynthetic process"/>
    <property type="evidence" value="ECO:0007669"/>
    <property type="project" value="TreeGrafter"/>
</dbReference>
<dbReference type="GO" id="GO:0008652">
    <property type="term" value="P:amino acid biosynthetic process"/>
    <property type="evidence" value="ECO:0007669"/>
    <property type="project" value="UniProtKB-KW"/>
</dbReference>
<dbReference type="GO" id="GO:0009073">
    <property type="term" value="P:aromatic amino acid family biosynthetic process"/>
    <property type="evidence" value="ECO:0007669"/>
    <property type="project" value="UniProtKB-KW"/>
</dbReference>
<dbReference type="GO" id="GO:0009423">
    <property type="term" value="P:chorismate biosynthetic process"/>
    <property type="evidence" value="ECO:0007669"/>
    <property type="project" value="UniProtKB-UniRule"/>
</dbReference>
<dbReference type="CDD" id="cd00502">
    <property type="entry name" value="DHQase_I"/>
    <property type="match status" value="1"/>
</dbReference>
<dbReference type="FunFam" id="3.20.20.70:FF:000216">
    <property type="entry name" value="3-dehydroquinate dehydratase"/>
    <property type="match status" value="1"/>
</dbReference>
<dbReference type="Gene3D" id="3.20.20.70">
    <property type="entry name" value="Aldolase class I"/>
    <property type="match status" value="1"/>
</dbReference>
<dbReference type="HAMAP" id="MF_00214">
    <property type="entry name" value="AroD"/>
    <property type="match status" value="1"/>
</dbReference>
<dbReference type="InterPro" id="IPR013785">
    <property type="entry name" value="Aldolase_TIM"/>
</dbReference>
<dbReference type="InterPro" id="IPR001381">
    <property type="entry name" value="DHquinase_I"/>
</dbReference>
<dbReference type="InterPro" id="IPR050146">
    <property type="entry name" value="Type-I_3-dehydroquinase"/>
</dbReference>
<dbReference type="NCBIfam" id="TIGR01093">
    <property type="entry name" value="aroD"/>
    <property type="match status" value="1"/>
</dbReference>
<dbReference type="PANTHER" id="PTHR43699">
    <property type="entry name" value="3-DEHYDROQUINATE DEHYDRATASE"/>
    <property type="match status" value="1"/>
</dbReference>
<dbReference type="PANTHER" id="PTHR43699:SF1">
    <property type="entry name" value="3-DEHYDROQUINATE DEHYDRATASE"/>
    <property type="match status" value="1"/>
</dbReference>
<dbReference type="Pfam" id="PF01487">
    <property type="entry name" value="DHquinase_I"/>
    <property type="match status" value="1"/>
</dbReference>
<dbReference type="SUPFAM" id="SSF51569">
    <property type="entry name" value="Aldolase"/>
    <property type="match status" value="1"/>
</dbReference>
<comment type="function">
    <text evidence="1">Involved in the third step of the chorismate pathway, which leads to the biosynthesis of aromatic amino acids. Catalyzes the cis-dehydration of 3-dehydroquinate (DHQ) and introduces the first double bond of the aromatic ring to yield 3-dehydroshikimate.</text>
</comment>
<comment type="catalytic activity">
    <reaction evidence="1">
        <text>3-dehydroquinate = 3-dehydroshikimate + H2O</text>
        <dbReference type="Rhea" id="RHEA:21096"/>
        <dbReference type="ChEBI" id="CHEBI:15377"/>
        <dbReference type="ChEBI" id="CHEBI:16630"/>
        <dbReference type="ChEBI" id="CHEBI:32364"/>
        <dbReference type="EC" id="4.2.1.10"/>
    </reaction>
</comment>
<comment type="pathway">
    <text evidence="1">Metabolic intermediate biosynthesis; chorismate biosynthesis; chorismate from D-erythrose 4-phosphate and phosphoenolpyruvate: step 3/7.</text>
</comment>
<comment type="subunit">
    <text evidence="1">Homodimer.</text>
</comment>
<comment type="similarity">
    <text evidence="1">Belongs to the type-I 3-dehydroquinase family.</text>
</comment>
<protein>
    <recommendedName>
        <fullName evidence="1">3-dehydroquinate dehydratase</fullName>
        <shortName evidence="1">3-dehydroquinase</shortName>
        <ecNumber evidence="1">4.2.1.10</ecNumber>
    </recommendedName>
    <alternativeName>
        <fullName evidence="1">Type I DHQase</fullName>
    </alternativeName>
    <alternativeName>
        <fullName evidence="1">Type I dehydroquinase</fullName>
        <shortName evidence="1">DHQ1</shortName>
    </alternativeName>
</protein>
<evidence type="ECO:0000255" key="1">
    <source>
        <dbReference type="HAMAP-Rule" id="MF_00214"/>
    </source>
</evidence>
<proteinExistence type="inferred from homology"/>
<name>AROD_STAAW</name>
<sequence>MTHVEVVATIAPQLSIEETLIQKINHRIDAIDVLELRIDQIENVTVDQVAEMITKLKVMQDSFKLLVTYRTKLQGGYGQFINDLYLNLISDLANINGIDMIDIEWQADIDIEKHQRIITHLQQYNKEVVISHHNFESTPPLDELQFIFFKMQKFNPEYVKLAVMPHNKNDVLNLLQAMSTFSDTMDCKVVGISMSKLGLISRTAQGVFGGALTYGCIGEPQAPGQIDVTDLKAQVTLY</sequence>
<keyword id="KW-0028">Amino-acid biosynthesis</keyword>
<keyword id="KW-0057">Aromatic amino acid biosynthesis</keyword>
<keyword id="KW-0456">Lyase</keyword>
<keyword id="KW-0704">Schiff base</keyword>
<feature type="chain" id="PRO_0000138813" description="3-dehydroquinate dehydratase">
    <location>
        <begin position="1"/>
        <end position="238"/>
    </location>
</feature>
<feature type="active site" description="Proton donor/acceptor" evidence="1">
    <location>
        <position position="133"/>
    </location>
</feature>
<feature type="active site" description="Schiff-base intermediate with substrate" evidence="1">
    <location>
        <position position="160"/>
    </location>
</feature>
<feature type="binding site" evidence="1">
    <location>
        <begin position="35"/>
        <end position="37"/>
    </location>
    <ligand>
        <name>3-dehydroquinate</name>
        <dbReference type="ChEBI" id="CHEBI:32364"/>
    </ligand>
</feature>
<feature type="binding site" evidence="1">
    <location>
        <position position="70"/>
    </location>
    <ligand>
        <name>3-dehydroquinate</name>
        <dbReference type="ChEBI" id="CHEBI:32364"/>
    </ligand>
</feature>
<feature type="binding site" evidence="1">
    <location>
        <position position="202"/>
    </location>
    <ligand>
        <name>3-dehydroquinate</name>
        <dbReference type="ChEBI" id="CHEBI:32364"/>
    </ligand>
</feature>
<feature type="binding site" evidence="1">
    <location>
        <position position="225"/>
    </location>
    <ligand>
        <name>3-dehydroquinate</name>
        <dbReference type="ChEBI" id="CHEBI:32364"/>
    </ligand>
</feature>
<organism>
    <name type="scientific">Staphylococcus aureus (strain MW2)</name>
    <dbReference type="NCBI Taxonomy" id="196620"/>
    <lineage>
        <taxon>Bacteria</taxon>
        <taxon>Bacillati</taxon>
        <taxon>Bacillota</taxon>
        <taxon>Bacilli</taxon>
        <taxon>Bacillales</taxon>
        <taxon>Staphylococcaceae</taxon>
        <taxon>Staphylococcus</taxon>
    </lineage>
</organism>
<accession>Q8NXI0</accession>